<feature type="peptide" id="PRO_0000398811" description="Ocellatin-K1" evidence="2">
    <location>
        <begin position="1"/>
        <end position="25"/>
    </location>
</feature>
<feature type="modified residue" description="Isoleucine amide" evidence="2">
    <location>
        <position position="25"/>
    </location>
</feature>
<comment type="function">
    <text evidence="1">Has hemolytic and antibacterial activity.</text>
</comment>
<comment type="subcellular location">
    <subcellularLocation>
        <location evidence="2">Secreted</location>
    </subcellularLocation>
</comment>
<comment type="tissue specificity">
    <text evidence="2">Expressed by the skin glands.</text>
</comment>
<comment type="mass spectrometry" mass="2548.0" error="0.01" method="MALDI" evidence="2"/>
<comment type="similarity">
    <text evidence="4">Belongs to the frog skin active peptide (FSAP) family. Ocellatin subfamily.</text>
</comment>
<evidence type="ECO:0000250" key="1">
    <source>
        <dbReference type="UniProtKB" id="P83951"/>
    </source>
</evidence>
<evidence type="ECO:0000269" key="2">
    <source ref="1"/>
</evidence>
<evidence type="ECO:0000303" key="3">
    <source ref="1"/>
</evidence>
<evidence type="ECO:0000305" key="4"/>
<name>OCE1_LEPKN</name>
<proteinExistence type="evidence at protein level"/>
<protein>
    <recommendedName>
        <fullName evidence="3">Ocellatin-K1</fullName>
    </recommendedName>
</protein>
<keyword id="KW-0027">Amidation</keyword>
<keyword id="KW-0878">Amphibian defense peptide</keyword>
<keyword id="KW-0044">Antibiotic</keyword>
<keyword id="KW-0929">Antimicrobial</keyword>
<keyword id="KW-0204">Cytolysis</keyword>
<keyword id="KW-0903">Direct protein sequencing</keyword>
<keyword id="KW-0354">Hemolysis</keyword>
<keyword id="KW-0964">Secreted</keyword>
<sequence length="25" mass="2549">GVVDILKGAAKDLAGHLASKVMNKI</sequence>
<accession>P86711</accession>
<organism>
    <name type="scientific">Leptodactylus knudseni</name>
    <name type="common">Knudsen's thin-toed frog</name>
    <name type="synonym">Amazonian toad-frog</name>
    <dbReference type="NCBI Taxonomy" id="326593"/>
    <lineage>
        <taxon>Eukaryota</taxon>
        <taxon>Metazoa</taxon>
        <taxon>Chordata</taxon>
        <taxon>Craniata</taxon>
        <taxon>Vertebrata</taxon>
        <taxon>Euteleostomi</taxon>
        <taxon>Amphibia</taxon>
        <taxon>Batrachia</taxon>
        <taxon>Anura</taxon>
        <taxon>Neobatrachia</taxon>
        <taxon>Hyloidea</taxon>
        <taxon>Leptodactylidae</taxon>
        <taxon>Leptodactylinae</taxon>
        <taxon>Leptodactylus</taxon>
    </lineage>
</organism>
<dbReference type="BMRB" id="P86711"/>
<dbReference type="SMR" id="P86711"/>
<dbReference type="GO" id="GO:0005576">
    <property type="term" value="C:extracellular region"/>
    <property type="evidence" value="ECO:0007669"/>
    <property type="project" value="UniProtKB-SubCell"/>
</dbReference>
<dbReference type="GO" id="GO:0042742">
    <property type="term" value="P:defense response to bacterium"/>
    <property type="evidence" value="ECO:0007669"/>
    <property type="project" value="UniProtKB-KW"/>
</dbReference>
<dbReference type="GO" id="GO:0019836">
    <property type="term" value="P:symbiont-mediated hemolysis of host erythrocyte"/>
    <property type="evidence" value="ECO:0007669"/>
    <property type="project" value="InterPro"/>
</dbReference>
<dbReference type="InterPro" id="IPR012518">
    <property type="entry name" value="Antimicrobial15"/>
</dbReference>
<dbReference type="Pfam" id="PF08110">
    <property type="entry name" value="Antimicrobial15"/>
    <property type="match status" value="1"/>
</dbReference>
<reference key="1">
    <citation type="submission" date="2010-07" db="UniProtKB">
        <title>Identification of peptides from Amazonian Leptodactylus knudseni skin secretion by MALDI TOF/TOF.</title>
        <authorList>
            <person name="Cardozo-Filho J.L."/>
            <person name="Soares A.A."/>
            <person name="Bloch C. Jr."/>
            <person name="Silva L.P."/>
            <person name="Stabeli R.G."/>
            <person name="Calderon L.A."/>
        </authorList>
    </citation>
    <scope>PROTEIN SEQUENCE</scope>
    <scope>SUBCELLULAR LOCATION</scope>
    <scope>TISSUE SPECIFICITY</scope>
    <scope>MASS SPECTROMETRY</scope>
    <scope>AMIDATION AT ILE-25</scope>
    <source>
        <tissue>Skin secretion</tissue>
    </source>
</reference>